<name>RL18_STRPC</name>
<dbReference type="EMBL" id="CP000259">
    <property type="protein sequence ID" value="ABF31248.1"/>
    <property type="molecule type" value="Genomic_DNA"/>
</dbReference>
<dbReference type="SMR" id="Q1JP01"/>
<dbReference type="KEGG" id="spk:MGAS9429_Spy0060"/>
<dbReference type="HOGENOM" id="CLU_098841_0_1_9"/>
<dbReference type="Proteomes" id="UP000002433">
    <property type="component" value="Chromosome"/>
</dbReference>
<dbReference type="GO" id="GO:0022625">
    <property type="term" value="C:cytosolic large ribosomal subunit"/>
    <property type="evidence" value="ECO:0007669"/>
    <property type="project" value="TreeGrafter"/>
</dbReference>
<dbReference type="GO" id="GO:0008097">
    <property type="term" value="F:5S rRNA binding"/>
    <property type="evidence" value="ECO:0007669"/>
    <property type="project" value="TreeGrafter"/>
</dbReference>
<dbReference type="GO" id="GO:0003735">
    <property type="term" value="F:structural constituent of ribosome"/>
    <property type="evidence" value="ECO:0007669"/>
    <property type="project" value="InterPro"/>
</dbReference>
<dbReference type="GO" id="GO:0006412">
    <property type="term" value="P:translation"/>
    <property type="evidence" value="ECO:0007669"/>
    <property type="project" value="UniProtKB-UniRule"/>
</dbReference>
<dbReference type="CDD" id="cd00432">
    <property type="entry name" value="Ribosomal_L18_L5e"/>
    <property type="match status" value="1"/>
</dbReference>
<dbReference type="FunFam" id="3.30.420.100:FF:000001">
    <property type="entry name" value="50S ribosomal protein L18"/>
    <property type="match status" value="1"/>
</dbReference>
<dbReference type="Gene3D" id="3.30.420.100">
    <property type="match status" value="1"/>
</dbReference>
<dbReference type="HAMAP" id="MF_01337_B">
    <property type="entry name" value="Ribosomal_uL18_B"/>
    <property type="match status" value="1"/>
</dbReference>
<dbReference type="InterPro" id="IPR004389">
    <property type="entry name" value="Ribosomal_uL18_bac-type"/>
</dbReference>
<dbReference type="InterPro" id="IPR005484">
    <property type="entry name" value="Ribosomal_uL18_bac/euk"/>
</dbReference>
<dbReference type="NCBIfam" id="TIGR00060">
    <property type="entry name" value="L18_bact"/>
    <property type="match status" value="1"/>
</dbReference>
<dbReference type="PANTHER" id="PTHR12899">
    <property type="entry name" value="39S RIBOSOMAL PROTEIN L18, MITOCHONDRIAL"/>
    <property type="match status" value="1"/>
</dbReference>
<dbReference type="PANTHER" id="PTHR12899:SF3">
    <property type="entry name" value="LARGE RIBOSOMAL SUBUNIT PROTEIN UL18M"/>
    <property type="match status" value="1"/>
</dbReference>
<dbReference type="Pfam" id="PF00861">
    <property type="entry name" value="Ribosomal_L18p"/>
    <property type="match status" value="1"/>
</dbReference>
<dbReference type="SUPFAM" id="SSF53137">
    <property type="entry name" value="Translational machinery components"/>
    <property type="match status" value="1"/>
</dbReference>
<protein>
    <recommendedName>
        <fullName evidence="1">Large ribosomal subunit protein uL18</fullName>
    </recommendedName>
    <alternativeName>
        <fullName evidence="3">50S ribosomal protein L18</fullName>
    </alternativeName>
</protein>
<accession>Q1JP01</accession>
<evidence type="ECO:0000255" key="1">
    <source>
        <dbReference type="HAMAP-Rule" id="MF_01337"/>
    </source>
</evidence>
<evidence type="ECO:0000256" key="2">
    <source>
        <dbReference type="SAM" id="MobiDB-lite"/>
    </source>
</evidence>
<evidence type="ECO:0000305" key="3"/>
<feature type="chain" id="PRO_0000251378" description="Large ribosomal subunit protein uL18">
    <location>
        <begin position="1"/>
        <end position="121"/>
    </location>
</feature>
<feature type="region of interest" description="Disordered" evidence="2">
    <location>
        <begin position="1"/>
        <end position="25"/>
    </location>
</feature>
<feature type="compositionally biased region" description="Basic residues" evidence="2">
    <location>
        <begin position="13"/>
        <end position="23"/>
    </location>
</feature>
<keyword id="KW-0687">Ribonucleoprotein</keyword>
<keyword id="KW-0689">Ribosomal protein</keyword>
<keyword id="KW-0694">RNA-binding</keyword>
<keyword id="KW-0699">rRNA-binding</keyword>
<sequence>MKIVISKPDKNKIRQKRHRRVRGKLSGTADRPRLNVFRSNTGIYAQVIDDVAGVTLASASTLDKDVSKGTKTEQAVVVGKLVAERAVAKGISEVVFDRGGYLYHGRVKALADAARENGLKF</sequence>
<organism>
    <name type="scientific">Streptococcus pyogenes serotype M12 (strain MGAS9429)</name>
    <dbReference type="NCBI Taxonomy" id="370551"/>
    <lineage>
        <taxon>Bacteria</taxon>
        <taxon>Bacillati</taxon>
        <taxon>Bacillota</taxon>
        <taxon>Bacilli</taxon>
        <taxon>Lactobacillales</taxon>
        <taxon>Streptococcaceae</taxon>
        <taxon>Streptococcus</taxon>
    </lineage>
</organism>
<comment type="function">
    <text evidence="1">This is one of the proteins that bind and probably mediate the attachment of the 5S RNA into the large ribosomal subunit, where it forms part of the central protuberance.</text>
</comment>
<comment type="subunit">
    <text evidence="1">Part of the 50S ribosomal subunit; part of the 5S rRNA/L5/L18/L25 subcomplex. Contacts the 5S and 23S rRNAs.</text>
</comment>
<comment type="similarity">
    <text evidence="1">Belongs to the universal ribosomal protein uL18 family.</text>
</comment>
<reference key="1">
    <citation type="journal article" date="2006" name="Proc. Natl. Acad. Sci. U.S.A.">
        <title>Molecular genetic anatomy of inter- and intraserotype variation in the human bacterial pathogen group A Streptococcus.</title>
        <authorList>
            <person name="Beres S.B."/>
            <person name="Richter E.W."/>
            <person name="Nagiec M.J."/>
            <person name="Sumby P."/>
            <person name="Porcella S.F."/>
            <person name="DeLeo F.R."/>
            <person name="Musser J.M."/>
        </authorList>
    </citation>
    <scope>NUCLEOTIDE SEQUENCE [LARGE SCALE GENOMIC DNA]</scope>
    <source>
        <strain>MGAS9429</strain>
    </source>
</reference>
<gene>
    <name evidence="1" type="primary">rplR</name>
    <name type="ordered locus">MGAS9429_Spy0060</name>
</gene>
<proteinExistence type="inferred from homology"/>